<protein>
    <recommendedName>
        <fullName evidence="1">Lipoyl synthase, mitochondrial</fullName>
        <ecNumber evidence="1">2.8.1.8</ecNumber>
    </recommendedName>
    <alternativeName>
        <fullName evidence="1">Lipoate synthase</fullName>
        <shortName evidence="1">LS</shortName>
        <shortName evidence="1">Lip-syn</shortName>
    </alternativeName>
    <alternativeName>
        <fullName evidence="1">Lipoic acid synthase</fullName>
    </alternativeName>
</protein>
<sequence length="376" mass="42549">MLRALKGHVESPLIVVTRAASTNAEKLEEIRERLAKGPNFQDFVQNPDYSKSEWENYEGKLRREKGEEQRLRLPPWLKTTIPMGKNYAKIKNQLRELKLSTVCEEARCPNIGECWGGGEHGTQTATIMLMGDTCTRGCRFCSVKTARKPPPLDENEPVNTATAIASWGLDYIVLTSVDRDDLPDGGSKHIAKTVKEIKARNSNIFVECLVPDFRGDLGCVETIANCGLDVYAHNIETVEKLTPYVRDRRAHYRQTLKVLSEAKRFNPNLITKSSIMLGLGETDEEVENTLKDLREAGVDCITLGQYMQPTNKHLKVIEYVTPEKFKHWEDRGNQLGFLYTASGPLVRSSYKAGEFFITSILENRKKRQALNSKPEQ</sequence>
<comment type="function">
    <text evidence="1">Catalyzes the radical-mediated insertion of two sulfur atoms into the C-6 and C-8 positions of the octanoyl moiety bound to the lipoyl domains of lipoate-dependent enzymes, thereby converting the octanoylated domains into lipoylated derivatives.</text>
</comment>
<comment type="catalytic activity">
    <reaction evidence="1">
        <text>[[Fe-S] cluster scaffold protein carrying a second [4Fe-4S](2+) cluster] + N(6)-octanoyl-L-lysyl-[protein] + 2 oxidized [2Fe-2S]-[ferredoxin] + 2 S-adenosyl-L-methionine + 4 H(+) = [[Fe-S] cluster scaffold protein] + N(6)-[(R)-dihydrolipoyl]-L-lysyl-[protein] + 4 Fe(3+) + 2 hydrogen sulfide + 2 5'-deoxyadenosine + 2 L-methionine + 2 reduced [2Fe-2S]-[ferredoxin]</text>
        <dbReference type="Rhea" id="RHEA:16585"/>
        <dbReference type="Rhea" id="RHEA-COMP:9928"/>
        <dbReference type="Rhea" id="RHEA-COMP:10000"/>
        <dbReference type="Rhea" id="RHEA-COMP:10001"/>
        <dbReference type="Rhea" id="RHEA-COMP:10475"/>
        <dbReference type="Rhea" id="RHEA-COMP:14568"/>
        <dbReference type="Rhea" id="RHEA-COMP:14569"/>
        <dbReference type="ChEBI" id="CHEBI:15378"/>
        <dbReference type="ChEBI" id="CHEBI:17319"/>
        <dbReference type="ChEBI" id="CHEBI:29034"/>
        <dbReference type="ChEBI" id="CHEBI:29919"/>
        <dbReference type="ChEBI" id="CHEBI:33722"/>
        <dbReference type="ChEBI" id="CHEBI:33737"/>
        <dbReference type="ChEBI" id="CHEBI:33738"/>
        <dbReference type="ChEBI" id="CHEBI:57844"/>
        <dbReference type="ChEBI" id="CHEBI:59789"/>
        <dbReference type="ChEBI" id="CHEBI:78809"/>
        <dbReference type="ChEBI" id="CHEBI:83100"/>
        <dbReference type="EC" id="2.8.1.8"/>
    </reaction>
</comment>
<comment type="cofactor">
    <cofactor evidence="1">
        <name>[4Fe-4S] cluster</name>
        <dbReference type="ChEBI" id="CHEBI:49883"/>
    </cofactor>
    <text evidence="1">Binds 2 [4Fe-4S] clusters per subunit. One cluster is coordinated with 3 cysteines and an exchangeable S-adenosyl-L-methionine.</text>
</comment>
<comment type="pathway">
    <text evidence="1">Protein modification; protein lipoylation via endogenous pathway; protein N(6)-(lipoyl)lysine from octanoyl-[acyl-carrier-protein]: step 2/2.</text>
</comment>
<comment type="subcellular location">
    <subcellularLocation>
        <location evidence="1">Mitochondrion</location>
    </subcellularLocation>
</comment>
<comment type="miscellaneous">
    <text evidence="1">This protein may be expected to contain an N-terminal transit peptide but none has been predicted.</text>
</comment>
<comment type="similarity">
    <text evidence="1">Belongs to the radical SAM superfamily. Lipoyl synthase family.</text>
</comment>
<dbReference type="EC" id="2.8.1.8" evidence="1"/>
<dbReference type="EMBL" id="CH902618">
    <property type="protein sequence ID" value="EDV40080.1"/>
    <property type="molecule type" value="Genomic_DNA"/>
</dbReference>
<dbReference type="SMR" id="B3M996"/>
<dbReference type="FunCoup" id="B3M996">
    <property type="interactions" value="1799"/>
</dbReference>
<dbReference type="STRING" id="7217.B3M996"/>
<dbReference type="EnsemblMetazoa" id="FBtr0128834">
    <property type="protein sequence ID" value="FBpp0127326"/>
    <property type="gene ID" value="FBgn0101128"/>
</dbReference>
<dbReference type="EnsemblMetazoa" id="XM_001957238.4">
    <property type="protein sequence ID" value="XP_001957274.1"/>
    <property type="gene ID" value="LOC6506768"/>
</dbReference>
<dbReference type="GeneID" id="6506768"/>
<dbReference type="KEGG" id="dan:6506768"/>
<dbReference type="CTD" id="40259"/>
<dbReference type="eggNOG" id="KOG2672">
    <property type="taxonomic scope" value="Eukaryota"/>
</dbReference>
<dbReference type="HOGENOM" id="CLU_033144_2_0_1"/>
<dbReference type="InParanoid" id="B3M996"/>
<dbReference type="OMA" id="PYCDIDF"/>
<dbReference type="OrthoDB" id="3231at2759"/>
<dbReference type="PhylomeDB" id="B3M996"/>
<dbReference type="UniPathway" id="UPA00538">
    <property type="reaction ID" value="UER00593"/>
</dbReference>
<dbReference type="ChiTaRS" id="Las">
    <property type="organism name" value="fly"/>
</dbReference>
<dbReference type="Proteomes" id="UP000007801">
    <property type="component" value="Unassembled WGS sequence"/>
</dbReference>
<dbReference type="GO" id="GO:0005739">
    <property type="term" value="C:mitochondrion"/>
    <property type="evidence" value="ECO:0007669"/>
    <property type="project" value="UniProtKB-SubCell"/>
</dbReference>
<dbReference type="GO" id="GO:0051539">
    <property type="term" value="F:4 iron, 4 sulfur cluster binding"/>
    <property type="evidence" value="ECO:0007669"/>
    <property type="project" value="UniProtKB-UniRule"/>
</dbReference>
<dbReference type="GO" id="GO:0016992">
    <property type="term" value="F:lipoate synthase activity"/>
    <property type="evidence" value="ECO:0007669"/>
    <property type="project" value="UniProtKB-UniRule"/>
</dbReference>
<dbReference type="GO" id="GO:0046872">
    <property type="term" value="F:metal ion binding"/>
    <property type="evidence" value="ECO:0007669"/>
    <property type="project" value="UniProtKB-KW"/>
</dbReference>
<dbReference type="CDD" id="cd01335">
    <property type="entry name" value="Radical_SAM"/>
    <property type="match status" value="1"/>
</dbReference>
<dbReference type="FunFam" id="3.20.20.70:FF:000036">
    <property type="entry name" value="Lipoyl synthase, mitochondrial"/>
    <property type="match status" value="1"/>
</dbReference>
<dbReference type="Gene3D" id="3.20.20.70">
    <property type="entry name" value="Aldolase class I"/>
    <property type="match status" value="1"/>
</dbReference>
<dbReference type="HAMAP" id="MF_00206">
    <property type="entry name" value="Lipoyl_synth"/>
    <property type="match status" value="1"/>
</dbReference>
<dbReference type="InterPro" id="IPR013785">
    <property type="entry name" value="Aldolase_TIM"/>
</dbReference>
<dbReference type="InterPro" id="IPR006638">
    <property type="entry name" value="Elp3/MiaA/NifB-like_rSAM"/>
</dbReference>
<dbReference type="InterPro" id="IPR031691">
    <property type="entry name" value="LIAS_N"/>
</dbReference>
<dbReference type="InterPro" id="IPR003698">
    <property type="entry name" value="Lipoyl_synth"/>
</dbReference>
<dbReference type="InterPro" id="IPR007197">
    <property type="entry name" value="rSAM"/>
</dbReference>
<dbReference type="NCBIfam" id="TIGR00510">
    <property type="entry name" value="lipA"/>
    <property type="match status" value="1"/>
</dbReference>
<dbReference type="NCBIfam" id="NF004019">
    <property type="entry name" value="PRK05481.1"/>
    <property type="match status" value="1"/>
</dbReference>
<dbReference type="NCBIfam" id="NF009544">
    <property type="entry name" value="PRK12928.1"/>
    <property type="match status" value="1"/>
</dbReference>
<dbReference type="PANTHER" id="PTHR10949">
    <property type="entry name" value="LIPOYL SYNTHASE"/>
    <property type="match status" value="1"/>
</dbReference>
<dbReference type="PANTHER" id="PTHR10949:SF0">
    <property type="entry name" value="LIPOYL SYNTHASE, MITOCHONDRIAL"/>
    <property type="match status" value="1"/>
</dbReference>
<dbReference type="Pfam" id="PF16881">
    <property type="entry name" value="LIAS_N"/>
    <property type="match status" value="1"/>
</dbReference>
<dbReference type="Pfam" id="PF04055">
    <property type="entry name" value="Radical_SAM"/>
    <property type="match status" value="1"/>
</dbReference>
<dbReference type="PIRSF" id="PIRSF005963">
    <property type="entry name" value="Lipoyl_synth"/>
    <property type="match status" value="1"/>
</dbReference>
<dbReference type="SFLD" id="SFLDF00271">
    <property type="entry name" value="lipoyl_synthase"/>
    <property type="match status" value="1"/>
</dbReference>
<dbReference type="SFLD" id="SFLDS00029">
    <property type="entry name" value="Radical_SAM"/>
    <property type="match status" value="1"/>
</dbReference>
<dbReference type="SMART" id="SM00729">
    <property type="entry name" value="Elp3"/>
    <property type="match status" value="1"/>
</dbReference>
<dbReference type="SUPFAM" id="SSF102114">
    <property type="entry name" value="Radical SAM enzymes"/>
    <property type="match status" value="1"/>
</dbReference>
<dbReference type="PROSITE" id="PS51918">
    <property type="entry name" value="RADICAL_SAM"/>
    <property type="match status" value="1"/>
</dbReference>
<organism>
    <name type="scientific">Drosophila ananassae</name>
    <name type="common">Fruit fly</name>
    <dbReference type="NCBI Taxonomy" id="7217"/>
    <lineage>
        <taxon>Eukaryota</taxon>
        <taxon>Metazoa</taxon>
        <taxon>Ecdysozoa</taxon>
        <taxon>Arthropoda</taxon>
        <taxon>Hexapoda</taxon>
        <taxon>Insecta</taxon>
        <taxon>Pterygota</taxon>
        <taxon>Neoptera</taxon>
        <taxon>Endopterygota</taxon>
        <taxon>Diptera</taxon>
        <taxon>Brachycera</taxon>
        <taxon>Muscomorpha</taxon>
        <taxon>Ephydroidea</taxon>
        <taxon>Drosophilidae</taxon>
        <taxon>Drosophila</taxon>
        <taxon>Sophophora</taxon>
    </lineage>
</organism>
<keyword id="KW-0004">4Fe-4S</keyword>
<keyword id="KW-0408">Iron</keyword>
<keyword id="KW-0411">Iron-sulfur</keyword>
<keyword id="KW-0479">Metal-binding</keyword>
<keyword id="KW-0496">Mitochondrion</keyword>
<keyword id="KW-1185">Reference proteome</keyword>
<keyword id="KW-0949">S-adenosyl-L-methionine</keyword>
<keyword id="KW-0808">Transferase</keyword>
<reference key="1">
    <citation type="journal article" date="2007" name="Nature">
        <title>Evolution of genes and genomes on the Drosophila phylogeny.</title>
        <authorList>
            <consortium name="Drosophila 12 genomes consortium"/>
        </authorList>
    </citation>
    <scope>NUCLEOTIDE SEQUENCE [LARGE SCALE GENOMIC DNA]</scope>
    <source>
        <strain>Tucson 14024-0371.13</strain>
    </source>
</reference>
<accession>B3M996</accession>
<proteinExistence type="inferred from homology"/>
<gene>
    <name evidence="1" type="primary">Las</name>
    <name type="ORF">GF24134</name>
</gene>
<evidence type="ECO:0000255" key="1">
    <source>
        <dbReference type="HAMAP-Rule" id="MF_03123"/>
    </source>
</evidence>
<evidence type="ECO:0000255" key="2">
    <source>
        <dbReference type="PROSITE-ProRule" id="PRU01266"/>
    </source>
</evidence>
<feature type="chain" id="PRO_0000398216" description="Lipoyl synthase, mitochondrial">
    <location>
        <begin position="1"/>
        <end position="376"/>
    </location>
</feature>
<feature type="domain" description="Radical SAM core" evidence="2">
    <location>
        <begin position="119"/>
        <end position="338"/>
    </location>
</feature>
<feature type="binding site" evidence="1">
    <location>
        <position position="103"/>
    </location>
    <ligand>
        <name>[4Fe-4S] cluster</name>
        <dbReference type="ChEBI" id="CHEBI:49883"/>
        <label>1</label>
    </ligand>
</feature>
<feature type="binding site" evidence="1">
    <location>
        <position position="108"/>
    </location>
    <ligand>
        <name>[4Fe-4S] cluster</name>
        <dbReference type="ChEBI" id="CHEBI:49883"/>
        <label>1</label>
    </ligand>
</feature>
<feature type="binding site" evidence="1">
    <location>
        <position position="114"/>
    </location>
    <ligand>
        <name>[4Fe-4S] cluster</name>
        <dbReference type="ChEBI" id="CHEBI:49883"/>
        <label>1</label>
    </ligand>
</feature>
<feature type="binding site" evidence="1">
    <location>
        <position position="134"/>
    </location>
    <ligand>
        <name>[4Fe-4S] cluster</name>
        <dbReference type="ChEBI" id="CHEBI:49883"/>
        <label>2</label>
        <note>4Fe-4S-S-AdoMet</note>
    </ligand>
</feature>
<feature type="binding site" evidence="1">
    <location>
        <position position="138"/>
    </location>
    <ligand>
        <name>[4Fe-4S] cluster</name>
        <dbReference type="ChEBI" id="CHEBI:49883"/>
        <label>2</label>
        <note>4Fe-4S-S-AdoMet</note>
    </ligand>
</feature>
<feature type="binding site" evidence="1">
    <location>
        <position position="141"/>
    </location>
    <ligand>
        <name>[4Fe-4S] cluster</name>
        <dbReference type="ChEBI" id="CHEBI:49883"/>
        <label>2</label>
        <note>4Fe-4S-S-AdoMet</note>
    </ligand>
</feature>
<feature type="binding site" evidence="1">
    <location>
        <position position="349"/>
    </location>
    <ligand>
        <name>[4Fe-4S] cluster</name>
        <dbReference type="ChEBI" id="CHEBI:49883"/>
        <label>1</label>
    </ligand>
</feature>
<name>LIAS_DROAN</name>